<organism>
    <name type="scientific">Wolinella succinogenes (strain ATCC 29543 / DSM 1740 / CCUG 13145 / JCM 31913 / LMG 7466 / NCTC 11488 / FDC 602W)</name>
    <name type="common">Vibrio succinogenes</name>
    <dbReference type="NCBI Taxonomy" id="273121"/>
    <lineage>
        <taxon>Bacteria</taxon>
        <taxon>Pseudomonadati</taxon>
        <taxon>Campylobacterota</taxon>
        <taxon>Epsilonproteobacteria</taxon>
        <taxon>Campylobacterales</taxon>
        <taxon>Helicobacteraceae</taxon>
        <taxon>Wolinella</taxon>
    </lineage>
</organism>
<evidence type="ECO:0000255" key="1">
    <source>
        <dbReference type="HAMAP-Rule" id="MF_00212"/>
    </source>
</evidence>
<sequence>MQERRVDVVLVGGGIMSATLGVLLKELEPSWSMMLLERLEGVALESTGAWNNAGTGHQALCELNYTPMRSNGEIDIQKAIKINESFEISKQFWAYHVQKKHLKEPESFIHPVPHMSFVRGKDVAYLQARHKALSLHPLFCGMKYSESMDEIERWVPLIAEGRKREERVAATCIDWGTDVNFGSLTEQFSDYLAKQEGFVLKTHHEVVDIKRSQEGHWRVKSLDKKSGEFTEVEARFVFIGAGGAALPLLYKSGIPEARGYGGFPVSGQWLVCSNPEPIEIHRAKVYGKAAVGAPPMSVPHLDTRVIDGEKKLLFGPFAGFSTNFLKQGSYLDFFLSFNSGNFKTMIEAGLDNIPLTQYLINQVMLSLKGRIEVLKEYMPKAEFGDWELKIAGQRVQIIKPDAKNRGSLQFGTEVVASNDGSLAALLGASPGASTAVEAMLGVLEKCFKKELETPLWKEKLQEMIPSYGHPLSDDLGRLNENRRYTSGLLHLPFTPVQ</sequence>
<keyword id="KW-0274">FAD</keyword>
<keyword id="KW-0285">Flavoprotein</keyword>
<keyword id="KW-0560">Oxidoreductase</keyword>
<keyword id="KW-1185">Reference proteome</keyword>
<keyword id="KW-0816">Tricarboxylic acid cycle</keyword>
<comment type="catalytic activity">
    <reaction evidence="1">
        <text>(S)-malate + a quinone = a quinol + oxaloacetate</text>
        <dbReference type="Rhea" id="RHEA:46012"/>
        <dbReference type="ChEBI" id="CHEBI:15589"/>
        <dbReference type="ChEBI" id="CHEBI:16452"/>
        <dbReference type="ChEBI" id="CHEBI:24646"/>
        <dbReference type="ChEBI" id="CHEBI:132124"/>
        <dbReference type="EC" id="1.1.5.4"/>
    </reaction>
</comment>
<comment type="cofactor">
    <cofactor evidence="1">
        <name>FAD</name>
        <dbReference type="ChEBI" id="CHEBI:57692"/>
    </cofactor>
</comment>
<comment type="pathway">
    <text evidence="1">Carbohydrate metabolism; tricarboxylic acid cycle; oxaloacetate from (S)-malate (quinone route): step 1/1.</text>
</comment>
<comment type="similarity">
    <text evidence="1">Belongs to the MQO family.</text>
</comment>
<accession>Q7MBG6</accession>
<protein>
    <recommendedName>
        <fullName evidence="1">Probable malate:quinone oxidoreductase</fullName>
        <ecNumber evidence="1">1.1.5.4</ecNumber>
    </recommendedName>
    <alternativeName>
        <fullName evidence="1">MQO</fullName>
    </alternativeName>
    <alternativeName>
        <fullName evidence="1">Malate dehydrogenase [quinone]</fullName>
    </alternativeName>
</protein>
<gene>
    <name evidence="1" type="primary">mqo</name>
    <name type="ordered locus">WS0776</name>
</gene>
<proteinExistence type="inferred from homology"/>
<name>MQO_WOLSU</name>
<feature type="chain" id="PRO_0000128759" description="Probable malate:quinone oxidoreductase">
    <location>
        <begin position="1"/>
        <end position="497"/>
    </location>
</feature>
<reference key="1">
    <citation type="journal article" date="2003" name="Proc. Natl. Acad. Sci. U.S.A.">
        <title>Complete genome sequence and analysis of Wolinella succinogenes.</title>
        <authorList>
            <person name="Baar C."/>
            <person name="Eppinger M."/>
            <person name="Raddatz G."/>
            <person name="Simon J."/>
            <person name="Lanz C."/>
            <person name="Klimmek O."/>
            <person name="Nandakumar R."/>
            <person name="Gross R."/>
            <person name="Rosinus A."/>
            <person name="Keller H."/>
            <person name="Jagtap P."/>
            <person name="Linke B."/>
            <person name="Meyer F."/>
            <person name="Lederer H."/>
            <person name="Schuster S.C."/>
        </authorList>
    </citation>
    <scope>NUCLEOTIDE SEQUENCE [LARGE SCALE GENOMIC DNA]</scope>
    <source>
        <strain>ATCC 29543 / DSM 1740 / CCUG 13145 / JCM 31913 / LMG 7466 / NCTC 11488 / FDC 602W</strain>
    </source>
</reference>
<dbReference type="EC" id="1.1.5.4" evidence="1"/>
<dbReference type="EMBL" id="BX571659">
    <property type="protein sequence ID" value="CAE09891.1"/>
    <property type="molecule type" value="Genomic_DNA"/>
</dbReference>
<dbReference type="RefSeq" id="WP_011138688.1">
    <property type="nucleotide sequence ID" value="NC_005090.1"/>
</dbReference>
<dbReference type="SMR" id="Q7MBG6"/>
<dbReference type="STRING" id="273121.WS0776"/>
<dbReference type="KEGG" id="wsu:WS0776"/>
<dbReference type="eggNOG" id="COG0579">
    <property type="taxonomic scope" value="Bacteria"/>
</dbReference>
<dbReference type="HOGENOM" id="CLU_028151_0_0_7"/>
<dbReference type="UniPathway" id="UPA00223">
    <property type="reaction ID" value="UER01008"/>
</dbReference>
<dbReference type="Proteomes" id="UP000000422">
    <property type="component" value="Chromosome"/>
</dbReference>
<dbReference type="GO" id="GO:0047545">
    <property type="term" value="F:2-hydroxyglutarate dehydrogenase activity"/>
    <property type="evidence" value="ECO:0007669"/>
    <property type="project" value="TreeGrafter"/>
</dbReference>
<dbReference type="GO" id="GO:0008924">
    <property type="term" value="F:L-malate dehydrogenase (quinone) activity"/>
    <property type="evidence" value="ECO:0007669"/>
    <property type="project" value="UniProtKB-UniRule"/>
</dbReference>
<dbReference type="GO" id="GO:0006099">
    <property type="term" value="P:tricarboxylic acid cycle"/>
    <property type="evidence" value="ECO:0007669"/>
    <property type="project" value="UniProtKB-UniRule"/>
</dbReference>
<dbReference type="Gene3D" id="3.50.50.60">
    <property type="entry name" value="FAD/NAD(P)-binding domain"/>
    <property type="match status" value="1"/>
</dbReference>
<dbReference type="HAMAP" id="MF_00212">
    <property type="entry name" value="MQO"/>
    <property type="match status" value="1"/>
</dbReference>
<dbReference type="InterPro" id="IPR036188">
    <property type="entry name" value="FAD/NAD-bd_sf"/>
</dbReference>
<dbReference type="InterPro" id="IPR006231">
    <property type="entry name" value="MQO"/>
</dbReference>
<dbReference type="NCBIfam" id="TIGR01320">
    <property type="entry name" value="mal_quin_oxido"/>
    <property type="match status" value="1"/>
</dbReference>
<dbReference type="NCBIfam" id="NF003603">
    <property type="entry name" value="PRK05257.1-1"/>
    <property type="match status" value="1"/>
</dbReference>
<dbReference type="NCBIfam" id="NF003605">
    <property type="entry name" value="PRK05257.1-4"/>
    <property type="match status" value="1"/>
</dbReference>
<dbReference type="NCBIfam" id="NF003606">
    <property type="entry name" value="PRK05257.2-1"/>
    <property type="match status" value="1"/>
</dbReference>
<dbReference type="NCBIfam" id="NF003611">
    <property type="entry name" value="PRK05257.3-2"/>
    <property type="match status" value="1"/>
</dbReference>
<dbReference type="NCBIfam" id="NF009875">
    <property type="entry name" value="PRK13339.1"/>
    <property type="match status" value="1"/>
</dbReference>
<dbReference type="PANTHER" id="PTHR43104">
    <property type="entry name" value="L-2-HYDROXYGLUTARATE DEHYDROGENASE, MITOCHONDRIAL"/>
    <property type="match status" value="1"/>
</dbReference>
<dbReference type="PANTHER" id="PTHR43104:SF2">
    <property type="entry name" value="L-2-HYDROXYGLUTARATE DEHYDROGENASE, MITOCHONDRIAL"/>
    <property type="match status" value="1"/>
</dbReference>
<dbReference type="Pfam" id="PF06039">
    <property type="entry name" value="Mqo"/>
    <property type="match status" value="1"/>
</dbReference>
<dbReference type="SUPFAM" id="SSF51905">
    <property type="entry name" value="FAD/NAD(P)-binding domain"/>
    <property type="match status" value="1"/>
</dbReference>